<feature type="chain" id="PRO_0000224510" description="Valine--tRNA ligase">
    <location>
        <begin position="1"/>
        <end position="822"/>
    </location>
</feature>
<feature type="coiled-coil region" evidence="1">
    <location>
        <begin position="765"/>
        <end position="822"/>
    </location>
</feature>
<feature type="short sequence motif" description="'HIGH' region">
    <location>
        <begin position="41"/>
        <end position="51"/>
    </location>
</feature>
<feature type="short sequence motif" description="'KMSKS' region">
    <location>
        <begin position="511"/>
        <end position="515"/>
    </location>
</feature>
<feature type="binding site" evidence="1">
    <location>
        <position position="514"/>
    </location>
    <ligand>
        <name>ATP</name>
        <dbReference type="ChEBI" id="CHEBI:30616"/>
    </ligand>
</feature>
<comment type="function">
    <text evidence="1">Catalyzes the attachment of valine to tRNA(Val). As ValRS can inadvertently accommodate and process structurally similar amino acids such as threonine, to avoid such errors, it has a 'posttransfer' editing activity that hydrolyzes mischarged Thr-tRNA(Val) in a tRNA-dependent manner.</text>
</comment>
<comment type="catalytic activity">
    <reaction evidence="1">
        <text>tRNA(Val) + L-valine + ATP = L-valyl-tRNA(Val) + AMP + diphosphate</text>
        <dbReference type="Rhea" id="RHEA:10704"/>
        <dbReference type="Rhea" id="RHEA-COMP:9672"/>
        <dbReference type="Rhea" id="RHEA-COMP:9708"/>
        <dbReference type="ChEBI" id="CHEBI:30616"/>
        <dbReference type="ChEBI" id="CHEBI:33019"/>
        <dbReference type="ChEBI" id="CHEBI:57762"/>
        <dbReference type="ChEBI" id="CHEBI:78442"/>
        <dbReference type="ChEBI" id="CHEBI:78537"/>
        <dbReference type="ChEBI" id="CHEBI:456215"/>
        <dbReference type="EC" id="6.1.1.9"/>
    </reaction>
</comment>
<comment type="subunit">
    <text evidence="1">Monomer.</text>
</comment>
<comment type="subcellular location">
    <subcellularLocation>
        <location evidence="1">Cytoplasm</location>
    </subcellularLocation>
</comment>
<comment type="domain">
    <text evidence="1">ValRS has two distinct active sites: one for aminoacylation and one for editing. The misactivated threonine is translocated from the active site to the editing site.</text>
</comment>
<comment type="domain">
    <text evidence="1">The C-terminal coiled-coil domain is crucial for aminoacylation activity.</text>
</comment>
<comment type="similarity">
    <text evidence="1">Belongs to the class-I aminoacyl-tRNA synthetase family. ValS type 1 subfamily.</text>
</comment>
<sequence>MKNKYDFKLVEEKRNEKWQKKGFFIAPKQTKKPFSIISPPPNVTGQLHLGHSWNAFIQDSLVRYHKLQGFDVLLLPSVDHAGIATQVKVEEDLAKKGIKKSDLKREEFIKKCYHWKEKQYLKIKEQWDKLGICYDFSKERFTLDQDAQIAVSDFFIKLWEKNLIYRGQKAINWDIKLQTAISNIEVINKPVEQKMYYLKYFLENSNEFLTVATTRIETISSDVALAINPKDKRYLHLVGKKVVHPLTKKLIIIIADSNVSSDFGSGIMKVSAHSILDFEIMEKHNLESKDCIDNYGNLNHEVPEFQGQNRFFARDLIAKKLEKEGFLAKIETVISNVGFSQRSDEIVEILKKPQWFVKMDELAKSLISHLNSKDKIKFYPKNFEKNLRKWFEKIHDWTISRQLWWGHRIPVWCKNDEFKVQIDSPGQGWIQDEDVLDTWFSSGISAFAFLGWPQNFDLIKSYFPTSLLVTGWDILFFWVARMYFSSLFIMKQKPFEKVLLHGLIRDEIGRKMSKSLGNGLDPMEIIEKYGSDTLRQALIFNSSPGKDIKFNIEKLNTAWNLNNKIWNIAKYIADLDTFFAKPDLIDLWMENKIYILKRQIVKNIKKYNFSVIGTEINNFIYGDFSSRYIELIKTRKNGFYARKLLRKVLIILHPFLPFLTDFLMEKIFKMEILEQKMPRIRQFKENQKVENILEIIDNLRTYREKFQISKKIILEYCIINDKFSNAEIDIINKLTFGKWLENKELVIKTKNFEIAIKVPEELKKEQKGRELKEIQFLKSEILRAEKILTNKGFLEKAPREKIDLERTKLEKLKEKLVFYEKK</sequence>
<proteinExistence type="inferred from homology"/>
<accession>Q4A917</accession>
<name>SYV_MESHJ</name>
<organism>
    <name type="scientific">Mesomycoplasma hyopneumoniae (strain J / ATCC 25934 / NCTC 10110)</name>
    <name type="common">Mycoplasma hyopneumoniae</name>
    <dbReference type="NCBI Taxonomy" id="262719"/>
    <lineage>
        <taxon>Bacteria</taxon>
        <taxon>Bacillati</taxon>
        <taxon>Mycoplasmatota</taxon>
        <taxon>Mycoplasmoidales</taxon>
        <taxon>Metamycoplasmataceae</taxon>
        <taxon>Mesomycoplasma</taxon>
    </lineage>
</organism>
<evidence type="ECO:0000255" key="1">
    <source>
        <dbReference type="HAMAP-Rule" id="MF_02004"/>
    </source>
</evidence>
<dbReference type="EC" id="6.1.1.9" evidence="1"/>
<dbReference type="EMBL" id="AE017243">
    <property type="protein sequence ID" value="AAZ44754.1"/>
    <property type="molecule type" value="Genomic_DNA"/>
</dbReference>
<dbReference type="RefSeq" id="WP_011284391.1">
    <property type="nucleotide sequence ID" value="NC_007295.1"/>
</dbReference>
<dbReference type="SMR" id="Q4A917"/>
<dbReference type="GeneID" id="41334975"/>
<dbReference type="KEGG" id="mhj:MHJ_0671"/>
<dbReference type="eggNOG" id="COG0525">
    <property type="taxonomic scope" value="Bacteria"/>
</dbReference>
<dbReference type="HOGENOM" id="CLU_001493_0_2_14"/>
<dbReference type="OrthoDB" id="9810365at2"/>
<dbReference type="Proteomes" id="UP000000548">
    <property type="component" value="Chromosome"/>
</dbReference>
<dbReference type="GO" id="GO:0005829">
    <property type="term" value="C:cytosol"/>
    <property type="evidence" value="ECO:0007669"/>
    <property type="project" value="TreeGrafter"/>
</dbReference>
<dbReference type="GO" id="GO:0002161">
    <property type="term" value="F:aminoacyl-tRNA deacylase activity"/>
    <property type="evidence" value="ECO:0007669"/>
    <property type="project" value="InterPro"/>
</dbReference>
<dbReference type="GO" id="GO:0005524">
    <property type="term" value="F:ATP binding"/>
    <property type="evidence" value="ECO:0007669"/>
    <property type="project" value="UniProtKB-UniRule"/>
</dbReference>
<dbReference type="GO" id="GO:0004832">
    <property type="term" value="F:valine-tRNA ligase activity"/>
    <property type="evidence" value="ECO:0007669"/>
    <property type="project" value="UniProtKB-UniRule"/>
</dbReference>
<dbReference type="GO" id="GO:0006438">
    <property type="term" value="P:valyl-tRNA aminoacylation"/>
    <property type="evidence" value="ECO:0007669"/>
    <property type="project" value="UniProtKB-UniRule"/>
</dbReference>
<dbReference type="CDD" id="cd07962">
    <property type="entry name" value="Anticodon_Ia_Val"/>
    <property type="match status" value="1"/>
</dbReference>
<dbReference type="CDD" id="cd00817">
    <property type="entry name" value="ValRS_core"/>
    <property type="match status" value="1"/>
</dbReference>
<dbReference type="Gene3D" id="3.40.50.620">
    <property type="entry name" value="HUPs"/>
    <property type="match status" value="2"/>
</dbReference>
<dbReference type="Gene3D" id="1.10.730.10">
    <property type="entry name" value="Isoleucyl-tRNA Synthetase, Domain 1"/>
    <property type="match status" value="1"/>
</dbReference>
<dbReference type="Gene3D" id="1.10.287.380">
    <property type="entry name" value="Valyl-tRNA synthetase, C-terminal domain"/>
    <property type="match status" value="1"/>
</dbReference>
<dbReference type="HAMAP" id="MF_02004">
    <property type="entry name" value="Val_tRNA_synth_type1"/>
    <property type="match status" value="1"/>
</dbReference>
<dbReference type="InterPro" id="IPR001412">
    <property type="entry name" value="aa-tRNA-synth_I_CS"/>
</dbReference>
<dbReference type="InterPro" id="IPR002300">
    <property type="entry name" value="aa-tRNA-synth_Ia"/>
</dbReference>
<dbReference type="InterPro" id="IPR033705">
    <property type="entry name" value="Anticodon_Ia_Val"/>
</dbReference>
<dbReference type="InterPro" id="IPR013155">
    <property type="entry name" value="M/V/L/I-tRNA-synth_anticd-bd"/>
</dbReference>
<dbReference type="InterPro" id="IPR014729">
    <property type="entry name" value="Rossmann-like_a/b/a_fold"/>
</dbReference>
<dbReference type="InterPro" id="IPR010978">
    <property type="entry name" value="tRNA-bd_arm"/>
</dbReference>
<dbReference type="InterPro" id="IPR009080">
    <property type="entry name" value="tRNAsynth_Ia_anticodon-bd"/>
</dbReference>
<dbReference type="InterPro" id="IPR037118">
    <property type="entry name" value="Val-tRNA_synth_C_sf"/>
</dbReference>
<dbReference type="InterPro" id="IPR009008">
    <property type="entry name" value="Val/Leu/Ile-tRNA-synth_edit"/>
</dbReference>
<dbReference type="InterPro" id="IPR002303">
    <property type="entry name" value="Valyl-tRNA_ligase"/>
</dbReference>
<dbReference type="NCBIfam" id="NF004349">
    <property type="entry name" value="PRK05729.1"/>
    <property type="match status" value="1"/>
</dbReference>
<dbReference type="NCBIfam" id="TIGR00422">
    <property type="entry name" value="valS"/>
    <property type="match status" value="1"/>
</dbReference>
<dbReference type="PANTHER" id="PTHR11946:SF93">
    <property type="entry name" value="VALINE--TRNA LIGASE, CHLOROPLASTIC_MITOCHONDRIAL 2"/>
    <property type="match status" value="1"/>
</dbReference>
<dbReference type="PANTHER" id="PTHR11946">
    <property type="entry name" value="VALYL-TRNA SYNTHETASES"/>
    <property type="match status" value="1"/>
</dbReference>
<dbReference type="Pfam" id="PF08264">
    <property type="entry name" value="Anticodon_1"/>
    <property type="match status" value="1"/>
</dbReference>
<dbReference type="Pfam" id="PF00133">
    <property type="entry name" value="tRNA-synt_1"/>
    <property type="match status" value="2"/>
</dbReference>
<dbReference type="PRINTS" id="PR00986">
    <property type="entry name" value="TRNASYNTHVAL"/>
</dbReference>
<dbReference type="SUPFAM" id="SSF47323">
    <property type="entry name" value="Anticodon-binding domain of a subclass of class I aminoacyl-tRNA synthetases"/>
    <property type="match status" value="1"/>
</dbReference>
<dbReference type="SUPFAM" id="SSF52374">
    <property type="entry name" value="Nucleotidylyl transferase"/>
    <property type="match status" value="1"/>
</dbReference>
<dbReference type="SUPFAM" id="SSF46589">
    <property type="entry name" value="tRNA-binding arm"/>
    <property type="match status" value="1"/>
</dbReference>
<dbReference type="SUPFAM" id="SSF50677">
    <property type="entry name" value="ValRS/IleRS/LeuRS editing domain"/>
    <property type="match status" value="1"/>
</dbReference>
<dbReference type="PROSITE" id="PS00178">
    <property type="entry name" value="AA_TRNA_LIGASE_I"/>
    <property type="match status" value="1"/>
</dbReference>
<gene>
    <name evidence="1" type="primary">valS</name>
    <name type="ordered locus">MHJ_0671</name>
</gene>
<reference key="1">
    <citation type="journal article" date="2005" name="J. Bacteriol.">
        <title>Swine and poultry pathogens: the complete genome sequences of two strains of Mycoplasma hyopneumoniae and a strain of Mycoplasma synoviae.</title>
        <authorList>
            <person name="Vasconcelos A.T.R."/>
            <person name="Ferreira H.B."/>
            <person name="Bizarro C.V."/>
            <person name="Bonatto S.L."/>
            <person name="Carvalho M.O."/>
            <person name="Pinto P.M."/>
            <person name="Almeida D.F."/>
            <person name="Almeida L.G.P."/>
            <person name="Almeida R."/>
            <person name="Alves-Junior L."/>
            <person name="Assuncao E.N."/>
            <person name="Azevedo V.A.C."/>
            <person name="Bogo M.R."/>
            <person name="Brigido M.M."/>
            <person name="Brocchi M."/>
            <person name="Burity H.A."/>
            <person name="Camargo A.A."/>
            <person name="Camargo S.S."/>
            <person name="Carepo M.S."/>
            <person name="Carraro D.M."/>
            <person name="de Mattos Cascardo J.C."/>
            <person name="Castro L.A."/>
            <person name="Cavalcanti G."/>
            <person name="Chemale G."/>
            <person name="Collevatti R.G."/>
            <person name="Cunha C.W."/>
            <person name="Dallagiovanna B."/>
            <person name="Dambros B.P."/>
            <person name="Dellagostin O.A."/>
            <person name="Falcao C."/>
            <person name="Fantinatti-Garboggini F."/>
            <person name="Felipe M.S.S."/>
            <person name="Fiorentin L."/>
            <person name="Franco G.R."/>
            <person name="Freitas N.S.A."/>
            <person name="Frias D."/>
            <person name="Grangeiro T.B."/>
            <person name="Grisard E.C."/>
            <person name="Guimaraes C.T."/>
            <person name="Hungria M."/>
            <person name="Jardim S.N."/>
            <person name="Krieger M.A."/>
            <person name="Laurino J.P."/>
            <person name="Lima L.F.A."/>
            <person name="Lopes M.I."/>
            <person name="Loreto E.L.S."/>
            <person name="Madeira H.M.F."/>
            <person name="Manfio G.P."/>
            <person name="Maranhao A.Q."/>
            <person name="Martinkovics C.T."/>
            <person name="Medeiros S.R.B."/>
            <person name="Moreira M.A.M."/>
            <person name="Neiva M."/>
            <person name="Ramalho-Neto C.E."/>
            <person name="Nicolas M.F."/>
            <person name="Oliveira S.C."/>
            <person name="Paixao R.F.C."/>
            <person name="Pedrosa F.O."/>
            <person name="Pena S.D.J."/>
            <person name="Pereira M."/>
            <person name="Pereira-Ferrari L."/>
            <person name="Piffer I."/>
            <person name="Pinto L.S."/>
            <person name="Potrich D.P."/>
            <person name="Salim A.C.M."/>
            <person name="Santos F.R."/>
            <person name="Schmitt R."/>
            <person name="Schneider M.P.C."/>
            <person name="Schrank A."/>
            <person name="Schrank I.S."/>
            <person name="Schuck A.F."/>
            <person name="Seuanez H.N."/>
            <person name="Silva D.W."/>
            <person name="Silva R."/>
            <person name="Silva S.C."/>
            <person name="Soares C.M.A."/>
            <person name="Souza K.R.L."/>
            <person name="Souza R.C."/>
            <person name="Staats C.C."/>
            <person name="Steffens M.B.R."/>
            <person name="Teixeira S.M.R."/>
            <person name="Urmenyi T.P."/>
            <person name="Vainstein M.H."/>
            <person name="Zuccherato L.W."/>
            <person name="Simpson A.J.G."/>
            <person name="Zaha A."/>
        </authorList>
    </citation>
    <scope>NUCLEOTIDE SEQUENCE [LARGE SCALE GENOMIC DNA]</scope>
    <source>
        <strain>J / ATCC 25934 / NCTC 10110</strain>
    </source>
</reference>
<keyword id="KW-0030">Aminoacyl-tRNA synthetase</keyword>
<keyword id="KW-0067">ATP-binding</keyword>
<keyword id="KW-0175">Coiled coil</keyword>
<keyword id="KW-0963">Cytoplasm</keyword>
<keyword id="KW-0436">Ligase</keyword>
<keyword id="KW-0547">Nucleotide-binding</keyword>
<keyword id="KW-0648">Protein biosynthesis</keyword>
<protein>
    <recommendedName>
        <fullName evidence="1">Valine--tRNA ligase</fullName>
        <ecNumber evidence="1">6.1.1.9</ecNumber>
    </recommendedName>
    <alternativeName>
        <fullName evidence="1">Valyl-tRNA synthetase</fullName>
        <shortName evidence="1">ValRS</shortName>
    </alternativeName>
</protein>